<evidence type="ECO:0000250" key="1">
    <source>
        <dbReference type="UniProtKB" id="P62899"/>
    </source>
</evidence>
<evidence type="ECO:0000250" key="2">
    <source>
        <dbReference type="UniProtKB" id="P62900"/>
    </source>
</evidence>
<evidence type="ECO:0000305" key="3"/>
<gene>
    <name type="primary">RPL31</name>
</gene>
<comment type="function">
    <text evidence="1">Component of the large ribosomal subunit. The ribosome is a large ribonucleoprotein complex responsible for the synthesis of proteins in the cell.</text>
</comment>
<comment type="subunit">
    <text evidence="1">Component of the large ribosomal subunit.</text>
</comment>
<comment type="subcellular location">
    <subcellularLocation>
        <location evidence="1">Cytoplasm</location>
    </subcellularLocation>
</comment>
<comment type="similarity">
    <text evidence="3">Belongs to the eukaryotic ribosomal protein eL31 family.</text>
</comment>
<proteinExistence type="evidence at protein level"/>
<keyword id="KW-0002">3D-structure</keyword>
<keyword id="KW-0007">Acetylation</keyword>
<keyword id="KW-0963">Cytoplasm</keyword>
<keyword id="KW-0597">Phosphoprotein</keyword>
<keyword id="KW-1185">Reference proteome</keyword>
<keyword id="KW-0687">Ribonucleoprotein</keyword>
<keyword id="KW-0689">Ribosomal protein</keyword>
<organism>
    <name type="scientific">Sus scrofa</name>
    <name type="common">Pig</name>
    <dbReference type="NCBI Taxonomy" id="9823"/>
    <lineage>
        <taxon>Eukaryota</taxon>
        <taxon>Metazoa</taxon>
        <taxon>Chordata</taxon>
        <taxon>Craniata</taxon>
        <taxon>Vertebrata</taxon>
        <taxon>Euteleostomi</taxon>
        <taxon>Mammalia</taxon>
        <taxon>Eutheria</taxon>
        <taxon>Laurasiatheria</taxon>
        <taxon>Artiodactyla</taxon>
        <taxon>Suina</taxon>
        <taxon>Suidae</taxon>
        <taxon>Sus</taxon>
    </lineage>
</organism>
<dbReference type="EMBL" id="Z81183">
    <property type="protein sequence ID" value="CAB03558.1"/>
    <property type="molecule type" value="mRNA"/>
</dbReference>
<dbReference type="RefSeq" id="XP_005662419.1">
    <property type="nucleotide sequence ID" value="XM_005662362.3"/>
</dbReference>
<dbReference type="RefSeq" id="XP_005674290.1">
    <property type="nucleotide sequence ID" value="XM_005674233.2"/>
</dbReference>
<dbReference type="PDB" id="3J7O">
    <property type="method" value="EM"/>
    <property type="resolution" value="3.40 A"/>
    <property type="chains" value="d=1-125"/>
</dbReference>
<dbReference type="PDB" id="3J7P">
    <property type="method" value="EM"/>
    <property type="resolution" value="3.50 A"/>
    <property type="chains" value="d=1-125"/>
</dbReference>
<dbReference type="PDB" id="3J7Q">
    <property type="method" value="EM"/>
    <property type="resolution" value="3.40 A"/>
    <property type="chains" value="d=1-125"/>
</dbReference>
<dbReference type="PDB" id="3J7R">
    <property type="method" value="EM"/>
    <property type="resolution" value="3.90 A"/>
    <property type="chains" value="d=1-125"/>
</dbReference>
<dbReference type="PDBsum" id="3J7O"/>
<dbReference type="PDBsum" id="3J7P"/>
<dbReference type="PDBsum" id="3J7Q"/>
<dbReference type="PDBsum" id="3J7R"/>
<dbReference type="SMR" id="P62901"/>
<dbReference type="FunCoup" id="P62901">
    <property type="interactions" value="1580"/>
</dbReference>
<dbReference type="IntAct" id="P62901">
    <property type="interactions" value="1"/>
</dbReference>
<dbReference type="STRING" id="9823.ENSSSCP00000039744"/>
<dbReference type="PaxDb" id="9823-ENSSSCP00000008721"/>
<dbReference type="PeptideAtlas" id="P62901"/>
<dbReference type="Ensembl" id="ENSSSCT00000008947.5">
    <property type="protein sequence ID" value="ENSSSCP00000008721.2"/>
    <property type="gene ID" value="ENSSSCG00000008170.5"/>
</dbReference>
<dbReference type="Ensembl" id="ENSSSCT00015086465.1">
    <property type="protein sequence ID" value="ENSSSCP00015035169.1"/>
    <property type="gene ID" value="ENSSSCG00015064583.1"/>
</dbReference>
<dbReference type="Ensembl" id="ENSSSCT00040020244.1">
    <property type="protein sequence ID" value="ENSSSCP00040008472.1"/>
    <property type="gene ID" value="ENSSSCG00040015050.1"/>
</dbReference>
<dbReference type="Ensembl" id="ENSSSCT00050007682.1">
    <property type="protein sequence ID" value="ENSSSCP00050003248.1"/>
    <property type="gene ID" value="ENSSSCG00050005659.1"/>
</dbReference>
<dbReference type="Ensembl" id="ENSSSCT00055011499.1">
    <property type="protein sequence ID" value="ENSSSCP00055009096.1"/>
    <property type="gene ID" value="ENSSSCG00055005900.1"/>
</dbReference>
<dbReference type="Ensembl" id="ENSSSCT00060023161.1">
    <property type="protein sequence ID" value="ENSSSCP00060009652.1"/>
    <property type="gene ID" value="ENSSSCG00060017323.1"/>
</dbReference>
<dbReference type="Ensembl" id="ENSSSCT00065085759.1">
    <property type="protein sequence ID" value="ENSSSCP00065037487.1"/>
    <property type="gene ID" value="ENSSSCG00065062508.1"/>
</dbReference>
<dbReference type="Ensembl" id="ENSSSCT00070056817.1">
    <property type="protein sequence ID" value="ENSSSCP00070048274.1"/>
    <property type="gene ID" value="ENSSSCG00070028304.1"/>
</dbReference>
<dbReference type="Ensembl" id="ENSSSCT00070056821.1">
    <property type="protein sequence ID" value="ENSSSCP00070048278.1"/>
    <property type="gene ID" value="ENSSSCG00070028304.1"/>
</dbReference>
<dbReference type="Ensembl" id="ENSSSCT00085044613">
    <property type="protein sequence ID" value="ENSSSCP00085031168"/>
    <property type="gene ID" value="ENSSSCG00085023255"/>
</dbReference>
<dbReference type="Ensembl" id="ENSSSCT00090055846">
    <property type="protein sequence ID" value="ENSSSCP00090034875"/>
    <property type="gene ID" value="ENSSSCG00090031540"/>
</dbReference>
<dbReference type="Ensembl" id="ENSSSCT00105031219">
    <property type="protein sequence ID" value="ENSSSCP00105021787"/>
    <property type="gene ID" value="ENSSSCG00105016259"/>
</dbReference>
<dbReference type="Ensembl" id="ENSSSCT00110069871">
    <property type="protein sequence ID" value="ENSSSCP00110049175"/>
    <property type="gene ID" value="ENSSSCG00110036761"/>
</dbReference>
<dbReference type="Ensembl" id="ENSSSCT00115006754">
    <property type="protein sequence ID" value="ENSSSCP00115006333"/>
    <property type="gene ID" value="ENSSSCG00115003945"/>
</dbReference>
<dbReference type="Ensembl" id="ENSSSCT00130027037">
    <property type="protein sequence ID" value="ENSSSCP00130018321"/>
    <property type="gene ID" value="ENSSSCG00130013651"/>
</dbReference>
<dbReference type="GeneID" id="100737826"/>
<dbReference type="KEGG" id="ssc:100737826"/>
<dbReference type="CTD" id="6160"/>
<dbReference type="eggNOG" id="KOG0893">
    <property type="taxonomic scope" value="Eukaryota"/>
</dbReference>
<dbReference type="GeneTree" id="ENSGT00950000183030"/>
<dbReference type="HOGENOM" id="CLU_112570_1_1_1"/>
<dbReference type="InParanoid" id="P62901"/>
<dbReference type="OMA" id="EVWKQGI"/>
<dbReference type="OrthoDB" id="9739313at2759"/>
<dbReference type="TreeFam" id="TF314858"/>
<dbReference type="Reactome" id="R-SSC-156827">
    <property type="pathway name" value="L13a-mediated translational silencing of Ceruloplasmin expression"/>
</dbReference>
<dbReference type="Reactome" id="R-SSC-1799339">
    <property type="pathway name" value="SRP-dependent cotranslational protein targeting to membrane"/>
</dbReference>
<dbReference type="Reactome" id="R-SSC-6791226">
    <property type="pathway name" value="Major pathway of rRNA processing in the nucleolus and cytosol"/>
</dbReference>
<dbReference type="Reactome" id="R-SSC-72689">
    <property type="pathway name" value="Formation of a pool of free 40S subunits"/>
</dbReference>
<dbReference type="Reactome" id="R-SSC-72706">
    <property type="pathway name" value="GTP hydrolysis and joining of the 60S ribosomal subunit"/>
</dbReference>
<dbReference type="Reactome" id="R-SSC-975956">
    <property type="pathway name" value="Nonsense Mediated Decay (NMD) independent of the Exon Junction Complex (EJC)"/>
</dbReference>
<dbReference type="Reactome" id="R-SSC-975957">
    <property type="pathway name" value="Nonsense Mediated Decay (NMD) enhanced by the Exon Junction Complex (EJC)"/>
</dbReference>
<dbReference type="Proteomes" id="UP000008227">
    <property type="component" value="Chromosome 3"/>
</dbReference>
<dbReference type="Proteomes" id="UP000314985">
    <property type="component" value="Chromosome 3"/>
</dbReference>
<dbReference type="Proteomes" id="UP000694570">
    <property type="component" value="Unplaced"/>
</dbReference>
<dbReference type="Proteomes" id="UP000694571">
    <property type="component" value="Unplaced"/>
</dbReference>
<dbReference type="Proteomes" id="UP000694720">
    <property type="component" value="Unplaced"/>
</dbReference>
<dbReference type="Proteomes" id="UP000694722">
    <property type="component" value="Unplaced"/>
</dbReference>
<dbReference type="Proteomes" id="UP000694723">
    <property type="component" value="Unplaced"/>
</dbReference>
<dbReference type="Proteomes" id="UP000694724">
    <property type="component" value="Unplaced"/>
</dbReference>
<dbReference type="Proteomes" id="UP000694725">
    <property type="component" value="Unplaced"/>
</dbReference>
<dbReference type="Proteomes" id="UP000694726">
    <property type="component" value="Unplaced"/>
</dbReference>
<dbReference type="Proteomes" id="UP000694727">
    <property type="component" value="Unplaced"/>
</dbReference>
<dbReference type="Proteomes" id="UP000694728">
    <property type="component" value="Unplaced"/>
</dbReference>
<dbReference type="Bgee" id="ENSSSCG00000008170">
    <property type="expression patterns" value="Expressed in blood and 44 other cell types or tissues"/>
</dbReference>
<dbReference type="ExpressionAtlas" id="P62901">
    <property type="expression patterns" value="baseline and differential"/>
</dbReference>
<dbReference type="GO" id="GO:0098556">
    <property type="term" value="C:cytoplasmic side of rough endoplasmic reticulum membrane"/>
    <property type="evidence" value="ECO:0000314"/>
    <property type="project" value="UniProtKB"/>
</dbReference>
<dbReference type="GO" id="GO:0022625">
    <property type="term" value="C:cytosolic large ribosomal subunit"/>
    <property type="evidence" value="ECO:0000318"/>
    <property type="project" value="GO_Central"/>
</dbReference>
<dbReference type="GO" id="GO:0015934">
    <property type="term" value="C:large ribosomal subunit"/>
    <property type="evidence" value="ECO:0000314"/>
    <property type="project" value="UniProtKB"/>
</dbReference>
<dbReference type="GO" id="GO:0003735">
    <property type="term" value="F:structural constituent of ribosome"/>
    <property type="evidence" value="ECO:0000318"/>
    <property type="project" value="GO_Central"/>
</dbReference>
<dbReference type="GO" id="GO:0002181">
    <property type="term" value="P:cytoplasmic translation"/>
    <property type="evidence" value="ECO:0000318"/>
    <property type="project" value="GO_Central"/>
</dbReference>
<dbReference type="CDD" id="cd00463">
    <property type="entry name" value="Ribosomal_L31e"/>
    <property type="match status" value="1"/>
</dbReference>
<dbReference type="FunFam" id="3.10.440.10:FF:000001">
    <property type="entry name" value="60S ribosomal protein L31"/>
    <property type="match status" value="1"/>
</dbReference>
<dbReference type="Gene3D" id="3.10.440.10">
    <property type="match status" value="1"/>
</dbReference>
<dbReference type="InterPro" id="IPR000054">
    <property type="entry name" value="Ribosomal_eL31"/>
</dbReference>
<dbReference type="InterPro" id="IPR020052">
    <property type="entry name" value="Ribosomal_eL31_CS"/>
</dbReference>
<dbReference type="InterPro" id="IPR023621">
    <property type="entry name" value="Ribosomal_eL31_dom_sf"/>
</dbReference>
<dbReference type="PANTHER" id="PTHR10956">
    <property type="entry name" value="60S RIBOSOMAL PROTEIN L31"/>
    <property type="match status" value="1"/>
</dbReference>
<dbReference type="PANTHER" id="PTHR10956:SF0">
    <property type="entry name" value="60S RIBOSOMAL PROTEIN L31"/>
    <property type="match status" value="1"/>
</dbReference>
<dbReference type="Pfam" id="PF01198">
    <property type="entry name" value="Ribosomal_L31e"/>
    <property type="match status" value="1"/>
</dbReference>
<dbReference type="SMART" id="SM01380">
    <property type="entry name" value="Ribosomal_L31e"/>
    <property type="match status" value="1"/>
</dbReference>
<dbReference type="SUPFAM" id="SSF54575">
    <property type="entry name" value="Ribosomal protein L31e"/>
    <property type="match status" value="1"/>
</dbReference>
<dbReference type="PROSITE" id="PS01144">
    <property type="entry name" value="RIBOSOMAL_L31E"/>
    <property type="match status" value="1"/>
</dbReference>
<reference key="1">
    <citation type="journal article" date="1996" name="Mamm. Genome">
        <title>Evaluation and characterization of a porcine small intestine cDNA library: analysis of 839 clones.</title>
        <authorList>
            <person name="Winteroe A.K."/>
            <person name="Fredholm M."/>
            <person name="Davies W."/>
        </authorList>
    </citation>
    <scope>NUCLEOTIDE SEQUENCE [LARGE SCALE MRNA]</scope>
    <source>
        <tissue>Small intestine</tissue>
    </source>
</reference>
<accession>P62901</accession>
<accession>P12947</accession>
<protein>
    <recommendedName>
        <fullName evidence="3">Large ribosomal subunit protein eL31</fullName>
    </recommendedName>
    <alternativeName>
        <fullName>60S ribosomal protein L31</fullName>
    </alternativeName>
</protein>
<feature type="chain" id="PRO_0000153765" description="Large ribosomal subunit protein eL31">
    <location>
        <begin position="1"/>
        <end position="125"/>
    </location>
</feature>
<feature type="modified residue" description="N-acetylmethionine" evidence="1">
    <location>
        <position position="1"/>
    </location>
</feature>
<feature type="modified residue" description="Phosphoserine" evidence="2">
    <location>
        <position position="15"/>
    </location>
</feature>
<feature type="modified residue" description="N6-succinyllysine" evidence="2">
    <location>
        <position position="55"/>
    </location>
</feature>
<feature type="modified residue" description="N6-succinyllysine" evidence="2">
    <location>
        <position position="70"/>
    </location>
</feature>
<feature type="modified residue" description="N6-acetyllysine; alternate" evidence="1">
    <location>
        <position position="75"/>
    </location>
</feature>
<feature type="modified residue" description="N6-succinyllysine; alternate" evidence="2">
    <location>
        <position position="75"/>
    </location>
</feature>
<feature type="modified residue" description="Phosphoserine" evidence="1">
    <location>
        <position position="98"/>
    </location>
</feature>
<sequence>MAPAKKGGEKKKGRSAINEVVTREYTINIHKRIHGVGFKKRAPRALKEIRKFAMKEMGTPDVRIDTRLNKAVWAKGIRNVPYRIRVRLSRKRNEDEDSPNKLYTLVTYVPVTTFKNLQTVNVDEN</sequence>
<name>RL31_PIG</name>